<accession>B6DCZ9</accession>
<protein>
    <recommendedName>
        <fullName>U8-lycotoxin-Ls1q</fullName>
    </recommendedName>
    <alternativeName>
        <fullName>Toxin-like structure LSTX-H28</fullName>
    </alternativeName>
</protein>
<dbReference type="EMBL" id="EU926083">
    <property type="protein sequence ID" value="ACI41415.1"/>
    <property type="molecule type" value="mRNA"/>
</dbReference>
<dbReference type="EMBL" id="FM864087">
    <property type="protein sequence ID" value="CAS03684.1"/>
    <property type="molecule type" value="mRNA"/>
</dbReference>
<dbReference type="SMR" id="B6DCZ9"/>
<dbReference type="ArachnoServer" id="AS001022">
    <property type="toxin name" value="U8-lycotoxin-Ls1q"/>
</dbReference>
<dbReference type="GO" id="GO:0005576">
    <property type="term" value="C:extracellular region"/>
    <property type="evidence" value="ECO:0007669"/>
    <property type="project" value="UniProtKB-SubCell"/>
</dbReference>
<dbReference type="GO" id="GO:0090729">
    <property type="term" value="F:toxin activity"/>
    <property type="evidence" value="ECO:0007669"/>
    <property type="project" value="UniProtKB-KW"/>
</dbReference>
<dbReference type="InterPro" id="IPR019553">
    <property type="entry name" value="Spider_toxin_CSTX_knottin"/>
</dbReference>
<dbReference type="Pfam" id="PF10530">
    <property type="entry name" value="Toxin_35"/>
    <property type="match status" value="1"/>
</dbReference>
<comment type="subcellular location">
    <subcellularLocation>
        <location evidence="1">Secreted</location>
    </subcellularLocation>
</comment>
<comment type="tissue specificity">
    <text>Expressed by the venom gland.</text>
</comment>
<comment type="PTM">
    <text evidence="1">Contains 4 disulfide bonds.</text>
</comment>
<comment type="similarity">
    <text evidence="3">Belongs to the neurotoxin 19 (CSTX) family. 08 (U8-Lctx) subfamily.</text>
</comment>
<reference key="1">
    <citation type="journal article" date="2010" name="Zoology">
        <title>Transcriptome analysis of the venom glands of the Chinese wolf spider Lycosa singoriensis.</title>
        <authorList>
            <person name="Zhang Y."/>
            <person name="Chen J."/>
            <person name="Tang X."/>
            <person name="Wang F."/>
            <person name="Jiang L."/>
            <person name="Xiong X."/>
            <person name="Wang M."/>
            <person name="Rong M."/>
            <person name="Liu Z."/>
            <person name="Liang S."/>
        </authorList>
    </citation>
    <scope>NUCLEOTIDE SEQUENCE [LARGE SCALE MRNA]</scope>
    <source>
        <tissue>Venom gland</tissue>
    </source>
</reference>
<proteinExistence type="evidence at transcript level"/>
<name>TX828_LYCSI</name>
<sequence>MKLMIFAGLVLFAIVSLIEAQAEHEKPCLPEYKVCTHAPGNCCSDLVYDCYGRYKSGAQIGRNCFCLQKGVIYKREN</sequence>
<organism>
    <name type="scientific">Lycosa singoriensis</name>
    <name type="common">Wolf spider</name>
    <name type="synonym">Aranea singoriensis</name>
    <dbReference type="NCBI Taxonomy" id="434756"/>
    <lineage>
        <taxon>Eukaryota</taxon>
        <taxon>Metazoa</taxon>
        <taxon>Ecdysozoa</taxon>
        <taxon>Arthropoda</taxon>
        <taxon>Chelicerata</taxon>
        <taxon>Arachnida</taxon>
        <taxon>Araneae</taxon>
        <taxon>Araneomorphae</taxon>
        <taxon>Entelegynae</taxon>
        <taxon>Lycosoidea</taxon>
        <taxon>Lycosidae</taxon>
        <taxon>Lycosa</taxon>
    </lineage>
</organism>
<keyword id="KW-1015">Disulfide bond</keyword>
<keyword id="KW-0964">Secreted</keyword>
<keyword id="KW-0732">Signal</keyword>
<keyword id="KW-0800">Toxin</keyword>
<evidence type="ECO:0000250" key="1"/>
<evidence type="ECO:0000255" key="2"/>
<evidence type="ECO:0000305" key="3"/>
<feature type="signal peptide" evidence="2">
    <location>
        <begin position="1"/>
        <end position="20"/>
    </location>
</feature>
<feature type="propeptide" id="PRO_0000401817" evidence="1">
    <location>
        <begin position="21"/>
        <end position="26"/>
    </location>
</feature>
<feature type="chain" id="PRO_0000401818" description="U8-lycotoxin-Ls1q">
    <location>
        <begin position="27"/>
        <end position="77"/>
    </location>
</feature>